<protein>
    <recommendedName>
        <fullName evidence="1">Adenosylcobinamide-GDP ribazoletransferase</fullName>
        <ecNumber evidence="1">2.7.8.26</ecNumber>
    </recommendedName>
    <alternativeName>
        <fullName evidence="1">Cobalamin synthase</fullName>
    </alternativeName>
    <alternativeName>
        <fullName evidence="1">Cobalamin-5'-phosphate synthase</fullName>
    </alternativeName>
</protein>
<sequence length="268" mass="27865">MAGNLLNGLRAAIAFLTTLPVRIVDGDYDAFADRQYLFIPVAIVTGLLLGVAGTLFQCILPAPFAAVLTVACIFLLTGINHLDGLSDFGDGLIASGPREKKVRAMKDVHAGAGGLLFMAMDLLFLFALAMTFAGSPTWLFVPLLVAEGCAKVAQITIIAFGKSAHEGMGSYMIARMKKEHYLAAVIGAWIAIGIAIIGAAIIPGGGNPLRVIMAGGLAMLSPLAVALIILIISDRNFGGVNGDVIGAANEIARIAALGVMGAVLWMRF</sequence>
<organism>
    <name type="scientific">Methanocella arvoryzae (strain DSM 22066 / NBRC 105507 / MRE50)</name>
    <dbReference type="NCBI Taxonomy" id="351160"/>
    <lineage>
        <taxon>Archaea</taxon>
        <taxon>Methanobacteriati</taxon>
        <taxon>Methanobacteriota</taxon>
        <taxon>Stenosarchaea group</taxon>
        <taxon>Methanomicrobia</taxon>
        <taxon>Methanocellales</taxon>
        <taxon>Methanocellaceae</taxon>
        <taxon>Methanocella</taxon>
    </lineage>
</organism>
<proteinExistence type="inferred from homology"/>
<feature type="chain" id="PRO_1000132614" description="Adenosylcobinamide-GDP ribazoletransferase">
    <location>
        <begin position="1"/>
        <end position="268"/>
    </location>
</feature>
<feature type="transmembrane region" description="Helical" evidence="1">
    <location>
        <begin position="1"/>
        <end position="21"/>
    </location>
</feature>
<feature type="transmembrane region" description="Helical" evidence="1">
    <location>
        <begin position="36"/>
        <end position="56"/>
    </location>
</feature>
<feature type="transmembrane region" description="Helical" evidence="1">
    <location>
        <begin position="59"/>
        <end position="79"/>
    </location>
</feature>
<feature type="transmembrane region" description="Helical" evidence="1">
    <location>
        <begin position="112"/>
        <end position="132"/>
    </location>
</feature>
<feature type="transmembrane region" description="Helical" evidence="1">
    <location>
        <begin position="138"/>
        <end position="158"/>
    </location>
</feature>
<feature type="transmembrane region" description="Helical" evidence="1">
    <location>
        <begin position="182"/>
        <end position="202"/>
    </location>
</feature>
<feature type="transmembrane region" description="Helical" evidence="1">
    <location>
        <begin position="212"/>
        <end position="232"/>
    </location>
</feature>
<feature type="transmembrane region" description="Helical" evidence="1">
    <location>
        <begin position="244"/>
        <end position="264"/>
    </location>
</feature>
<evidence type="ECO:0000255" key="1">
    <source>
        <dbReference type="HAMAP-Rule" id="MF_00719"/>
    </source>
</evidence>
<dbReference type="EC" id="2.7.8.26" evidence="1"/>
<dbReference type="EMBL" id="AM114193">
    <property type="protein sequence ID" value="CAJ37698.1"/>
    <property type="molecule type" value="Genomic_DNA"/>
</dbReference>
<dbReference type="RefSeq" id="WP_012034887.1">
    <property type="nucleotide sequence ID" value="NC_009464.1"/>
</dbReference>
<dbReference type="STRING" id="351160.RCIX2652"/>
<dbReference type="GeneID" id="5143777"/>
<dbReference type="KEGG" id="rci:RCIX2652"/>
<dbReference type="PATRIC" id="fig|351160.9.peg.584"/>
<dbReference type="eggNOG" id="arCOG04338">
    <property type="taxonomic scope" value="Archaea"/>
</dbReference>
<dbReference type="OrthoDB" id="11748at2157"/>
<dbReference type="UniPathway" id="UPA00148">
    <property type="reaction ID" value="UER00238"/>
</dbReference>
<dbReference type="Proteomes" id="UP000000663">
    <property type="component" value="Chromosome"/>
</dbReference>
<dbReference type="GO" id="GO:0005886">
    <property type="term" value="C:plasma membrane"/>
    <property type="evidence" value="ECO:0007669"/>
    <property type="project" value="UniProtKB-SubCell"/>
</dbReference>
<dbReference type="GO" id="GO:0051073">
    <property type="term" value="F:adenosylcobinamide-GDP ribazoletransferase activity"/>
    <property type="evidence" value="ECO:0007669"/>
    <property type="project" value="UniProtKB-UniRule"/>
</dbReference>
<dbReference type="GO" id="GO:0008818">
    <property type="term" value="F:cobalamin 5'-phosphate synthase activity"/>
    <property type="evidence" value="ECO:0007669"/>
    <property type="project" value="UniProtKB-UniRule"/>
</dbReference>
<dbReference type="GO" id="GO:0009236">
    <property type="term" value="P:cobalamin biosynthetic process"/>
    <property type="evidence" value="ECO:0007669"/>
    <property type="project" value="UniProtKB-UniRule"/>
</dbReference>
<dbReference type="HAMAP" id="MF_00719">
    <property type="entry name" value="CobS"/>
    <property type="match status" value="1"/>
</dbReference>
<dbReference type="InterPro" id="IPR003805">
    <property type="entry name" value="CobS"/>
</dbReference>
<dbReference type="NCBIfam" id="TIGR00317">
    <property type="entry name" value="cobS"/>
    <property type="match status" value="1"/>
</dbReference>
<dbReference type="PANTHER" id="PTHR34148">
    <property type="entry name" value="ADENOSYLCOBINAMIDE-GDP RIBAZOLETRANSFERASE"/>
    <property type="match status" value="1"/>
</dbReference>
<dbReference type="PANTHER" id="PTHR34148:SF1">
    <property type="entry name" value="ADENOSYLCOBINAMIDE-GDP RIBAZOLETRANSFERASE"/>
    <property type="match status" value="1"/>
</dbReference>
<dbReference type="Pfam" id="PF02654">
    <property type="entry name" value="CobS"/>
    <property type="match status" value="1"/>
</dbReference>
<accession>Q0W1P5</accession>
<name>COBS_METAR</name>
<keyword id="KW-1003">Cell membrane</keyword>
<keyword id="KW-0169">Cobalamin biosynthesis</keyword>
<keyword id="KW-0460">Magnesium</keyword>
<keyword id="KW-0472">Membrane</keyword>
<keyword id="KW-1185">Reference proteome</keyword>
<keyword id="KW-0808">Transferase</keyword>
<keyword id="KW-0812">Transmembrane</keyword>
<keyword id="KW-1133">Transmembrane helix</keyword>
<reference key="1">
    <citation type="journal article" date="2006" name="Science">
        <title>Genome of rice cluster I archaea -- the key methane producers in the rice rhizosphere.</title>
        <authorList>
            <person name="Erkel C."/>
            <person name="Kube M."/>
            <person name="Reinhardt R."/>
            <person name="Liesack W."/>
        </authorList>
    </citation>
    <scope>NUCLEOTIDE SEQUENCE [LARGE SCALE GENOMIC DNA]</scope>
    <source>
        <strain>DSM 22066 / NBRC 105507 / MRE50</strain>
    </source>
</reference>
<comment type="function">
    <text evidence="1">Joins adenosylcobinamide-GDP and alpha-ribazole to generate adenosylcobalamin (Ado-cobalamin). Also synthesizes adenosylcobalamin 5'-phosphate from adenosylcobinamide-GDP and alpha-ribazole 5'-phosphate.</text>
</comment>
<comment type="catalytic activity">
    <reaction evidence="1">
        <text>alpha-ribazole + adenosylcob(III)inamide-GDP = adenosylcob(III)alamin + GMP + H(+)</text>
        <dbReference type="Rhea" id="RHEA:16049"/>
        <dbReference type="ChEBI" id="CHEBI:10329"/>
        <dbReference type="ChEBI" id="CHEBI:15378"/>
        <dbReference type="ChEBI" id="CHEBI:18408"/>
        <dbReference type="ChEBI" id="CHEBI:58115"/>
        <dbReference type="ChEBI" id="CHEBI:60487"/>
        <dbReference type="EC" id="2.7.8.26"/>
    </reaction>
</comment>
<comment type="catalytic activity">
    <reaction evidence="1">
        <text>alpha-ribazole 5'-phosphate + adenosylcob(III)inamide-GDP = adenosylcob(III)alamin 5'-phosphate + GMP + H(+)</text>
        <dbReference type="Rhea" id="RHEA:23560"/>
        <dbReference type="ChEBI" id="CHEBI:15378"/>
        <dbReference type="ChEBI" id="CHEBI:57918"/>
        <dbReference type="ChEBI" id="CHEBI:58115"/>
        <dbReference type="ChEBI" id="CHEBI:60487"/>
        <dbReference type="ChEBI" id="CHEBI:60493"/>
        <dbReference type="EC" id="2.7.8.26"/>
    </reaction>
</comment>
<comment type="cofactor">
    <cofactor evidence="1">
        <name>Mg(2+)</name>
        <dbReference type="ChEBI" id="CHEBI:18420"/>
    </cofactor>
</comment>
<comment type="pathway">
    <text evidence="1">Cofactor biosynthesis; adenosylcobalamin biosynthesis; adenosylcobalamin from cob(II)yrinate a,c-diamide: step 7/7.</text>
</comment>
<comment type="subcellular location">
    <subcellularLocation>
        <location evidence="1">Cell membrane</location>
        <topology evidence="1">Multi-pass membrane protein</topology>
    </subcellularLocation>
</comment>
<comment type="similarity">
    <text evidence="1">Belongs to the CobS family.</text>
</comment>
<gene>
    <name evidence="1" type="primary">cobS</name>
    <name type="ordered locus">UNCMA_05580</name>
    <name type="ORF">RCIX2652</name>
</gene>